<evidence type="ECO:0000255" key="1">
    <source>
        <dbReference type="HAMAP-Rule" id="MF_00519"/>
    </source>
</evidence>
<reference key="1">
    <citation type="journal article" date="2006" name="Proc. Natl. Acad. Sci. U.S.A.">
        <title>Comparative genomics of the lactic acid bacteria.</title>
        <authorList>
            <person name="Makarova K.S."/>
            <person name="Slesarev A."/>
            <person name="Wolf Y.I."/>
            <person name="Sorokin A."/>
            <person name="Mirkin B."/>
            <person name="Koonin E.V."/>
            <person name="Pavlov A."/>
            <person name="Pavlova N."/>
            <person name="Karamychev V."/>
            <person name="Polouchine N."/>
            <person name="Shakhova V."/>
            <person name="Grigoriev I."/>
            <person name="Lou Y."/>
            <person name="Rohksar D."/>
            <person name="Lucas S."/>
            <person name="Huang K."/>
            <person name="Goodstein D.M."/>
            <person name="Hawkins T."/>
            <person name="Plengvidhya V."/>
            <person name="Welker D."/>
            <person name="Hughes J."/>
            <person name="Goh Y."/>
            <person name="Benson A."/>
            <person name="Baldwin K."/>
            <person name="Lee J.-H."/>
            <person name="Diaz-Muniz I."/>
            <person name="Dosti B."/>
            <person name="Smeianov V."/>
            <person name="Wechter W."/>
            <person name="Barabote R."/>
            <person name="Lorca G."/>
            <person name="Altermann E."/>
            <person name="Barrangou R."/>
            <person name="Ganesan B."/>
            <person name="Xie Y."/>
            <person name="Rawsthorne H."/>
            <person name="Tamir D."/>
            <person name="Parker C."/>
            <person name="Breidt F."/>
            <person name="Broadbent J.R."/>
            <person name="Hutkins R."/>
            <person name="O'Sullivan D."/>
            <person name="Steele J."/>
            <person name="Unlu G."/>
            <person name="Saier M.H. Jr."/>
            <person name="Klaenhammer T."/>
            <person name="Richardson P."/>
            <person name="Kozyavkin S."/>
            <person name="Weimer B.C."/>
            <person name="Mills D.A."/>
        </authorList>
    </citation>
    <scope>NUCLEOTIDE SEQUENCE [LARGE SCALE GENOMIC DNA]</scope>
    <source>
        <strain>ATCC 25745 / CCUG 21536 / LMG 10740 / 183-1w</strain>
    </source>
</reference>
<comment type="function">
    <text evidence="1">Catalyzes the conversion of L-arabinose to L-ribulose.</text>
</comment>
<comment type="catalytic activity">
    <reaction evidence="1">
        <text>beta-L-arabinopyranose = L-ribulose</text>
        <dbReference type="Rhea" id="RHEA:14821"/>
        <dbReference type="ChEBI" id="CHEBI:16880"/>
        <dbReference type="ChEBI" id="CHEBI:40886"/>
        <dbReference type="EC" id="5.3.1.4"/>
    </reaction>
</comment>
<comment type="cofactor">
    <cofactor evidence="1">
        <name>Mn(2+)</name>
        <dbReference type="ChEBI" id="CHEBI:29035"/>
    </cofactor>
    <text evidence="1">Binds 1 Mn(2+) ion per subunit.</text>
</comment>
<comment type="pathway">
    <text evidence="1">Carbohydrate degradation; L-arabinose degradation via L-ribulose; D-xylulose 5-phosphate from L-arabinose (bacterial route): step 1/3.</text>
</comment>
<comment type="similarity">
    <text evidence="1">Belongs to the arabinose isomerase family.</text>
</comment>
<feature type="chain" id="PRO_0000312615" description="L-arabinose isomerase">
    <location>
        <begin position="1"/>
        <end position="474"/>
    </location>
</feature>
<feature type="binding site" evidence="1">
    <location>
        <position position="306"/>
    </location>
    <ligand>
        <name>Mn(2+)</name>
        <dbReference type="ChEBI" id="CHEBI:29035"/>
    </ligand>
</feature>
<feature type="binding site" evidence="1">
    <location>
        <position position="331"/>
    </location>
    <ligand>
        <name>Mn(2+)</name>
        <dbReference type="ChEBI" id="CHEBI:29035"/>
    </ligand>
</feature>
<feature type="binding site" evidence="1">
    <location>
        <position position="348"/>
    </location>
    <ligand>
        <name>Mn(2+)</name>
        <dbReference type="ChEBI" id="CHEBI:29035"/>
    </ligand>
</feature>
<feature type="binding site" evidence="1">
    <location>
        <position position="447"/>
    </location>
    <ligand>
        <name>Mn(2+)</name>
        <dbReference type="ChEBI" id="CHEBI:29035"/>
    </ligand>
</feature>
<keyword id="KW-0054">Arabinose catabolism</keyword>
<keyword id="KW-0119">Carbohydrate metabolism</keyword>
<keyword id="KW-0413">Isomerase</keyword>
<keyword id="KW-0464">Manganese</keyword>
<keyword id="KW-0479">Metal-binding</keyword>
<organism>
    <name type="scientific">Pediococcus pentosaceus (strain ATCC 25745 / CCUG 21536 / LMG 10740 / 183-1w)</name>
    <dbReference type="NCBI Taxonomy" id="278197"/>
    <lineage>
        <taxon>Bacteria</taxon>
        <taxon>Bacillati</taxon>
        <taxon>Bacillota</taxon>
        <taxon>Bacilli</taxon>
        <taxon>Lactobacillales</taxon>
        <taxon>Lactobacillaceae</taxon>
        <taxon>Pediococcus</taxon>
    </lineage>
</organism>
<protein>
    <recommendedName>
        <fullName evidence="1">L-arabinose isomerase</fullName>
        <ecNumber evidence="1">5.3.1.4</ecNumber>
    </recommendedName>
</protein>
<dbReference type="EC" id="5.3.1.4" evidence="1"/>
<dbReference type="EMBL" id="CP000422">
    <property type="protein sequence ID" value="ABJ67272.1"/>
    <property type="molecule type" value="Genomic_DNA"/>
</dbReference>
<dbReference type="RefSeq" id="WP_002834340.1">
    <property type="nucleotide sequence ID" value="NC_008525.1"/>
</dbReference>
<dbReference type="SMR" id="Q03HQ0"/>
<dbReference type="STRING" id="278197.PEPE_0165"/>
<dbReference type="GeneID" id="33062008"/>
<dbReference type="KEGG" id="ppe:PEPE_0165"/>
<dbReference type="eggNOG" id="COG2160">
    <property type="taxonomic scope" value="Bacteria"/>
</dbReference>
<dbReference type="HOGENOM" id="CLU_045663_0_0_9"/>
<dbReference type="OrthoDB" id="9765600at2"/>
<dbReference type="UniPathway" id="UPA00145">
    <property type="reaction ID" value="UER00565"/>
</dbReference>
<dbReference type="Proteomes" id="UP000000773">
    <property type="component" value="Chromosome"/>
</dbReference>
<dbReference type="GO" id="GO:0005829">
    <property type="term" value="C:cytosol"/>
    <property type="evidence" value="ECO:0007669"/>
    <property type="project" value="TreeGrafter"/>
</dbReference>
<dbReference type="GO" id="GO:0008733">
    <property type="term" value="F:L-arabinose isomerase activity"/>
    <property type="evidence" value="ECO:0007669"/>
    <property type="project" value="UniProtKB-UniRule"/>
</dbReference>
<dbReference type="GO" id="GO:0030145">
    <property type="term" value="F:manganese ion binding"/>
    <property type="evidence" value="ECO:0007669"/>
    <property type="project" value="UniProtKB-UniRule"/>
</dbReference>
<dbReference type="GO" id="GO:0019569">
    <property type="term" value="P:L-arabinose catabolic process to xylulose 5-phosphate"/>
    <property type="evidence" value="ECO:0007669"/>
    <property type="project" value="UniProtKB-UniRule"/>
</dbReference>
<dbReference type="Gene3D" id="3.40.50.10940">
    <property type="match status" value="1"/>
</dbReference>
<dbReference type="HAMAP" id="MF_00519">
    <property type="entry name" value="Arabinose_Isome"/>
    <property type="match status" value="1"/>
</dbReference>
<dbReference type="InterPro" id="IPR024664">
    <property type="entry name" value="Ara_Isoase_C"/>
</dbReference>
<dbReference type="InterPro" id="IPR055390">
    <property type="entry name" value="AraA_central"/>
</dbReference>
<dbReference type="InterPro" id="IPR055389">
    <property type="entry name" value="AraA_N"/>
</dbReference>
<dbReference type="InterPro" id="IPR038583">
    <property type="entry name" value="AraA_N_sf"/>
</dbReference>
<dbReference type="InterPro" id="IPR004216">
    <property type="entry name" value="Fuc/Ara_isomerase_C"/>
</dbReference>
<dbReference type="InterPro" id="IPR009015">
    <property type="entry name" value="Fucose_isomerase_N/cen_sf"/>
</dbReference>
<dbReference type="InterPro" id="IPR003762">
    <property type="entry name" value="Lara_isomerase"/>
</dbReference>
<dbReference type="NCBIfam" id="NF002795">
    <property type="entry name" value="PRK02929.1"/>
    <property type="match status" value="1"/>
</dbReference>
<dbReference type="PANTHER" id="PTHR38464">
    <property type="entry name" value="L-ARABINOSE ISOMERASE"/>
    <property type="match status" value="1"/>
</dbReference>
<dbReference type="PANTHER" id="PTHR38464:SF1">
    <property type="entry name" value="L-ARABINOSE ISOMERASE"/>
    <property type="match status" value="1"/>
</dbReference>
<dbReference type="Pfam" id="PF24856">
    <property type="entry name" value="AraA_central"/>
    <property type="match status" value="1"/>
</dbReference>
<dbReference type="Pfam" id="PF02610">
    <property type="entry name" value="AraA_N"/>
    <property type="match status" value="1"/>
</dbReference>
<dbReference type="Pfam" id="PF11762">
    <property type="entry name" value="Arabinose_Iso_C"/>
    <property type="match status" value="1"/>
</dbReference>
<dbReference type="PIRSF" id="PIRSF001478">
    <property type="entry name" value="L-ara_isomerase"/>
    <property type="match status" value="1"/>
</dbReference>
<dbReference type="SUPFAM" id="SSF50443">
    <property type="entry name" value="FucI/AraA C-terminal domain-like"/>
    <property type="match status" value="1"/>
</dbReference>
<dbReference type="SUPFAM" id="SSF53743">
    <property type="entry name" value="FucI/AraA N-terminal and middle domains"/>
    <property type="match status" value="1"/>
</dbReference>
<sequence length="474" mass="54056">MKKVQDYEFWFVTGSQFLYGEETLRSVEKDAKEIVDKLNESKKLPYPVKFKLVATTAENITEVMKEVNYNDKVAGVITWMHTFSPAKNWIRGTELLQKPLLHLATQFLNHIPYDTIDFDYMNLNQSAHGDREYAFINARLRKNNKIISGYWGDEGIQKQIAKWMDVAVAYNESYGIKVVTFADKMRNVAVTDGDKIEAQIKFGWTVDYWGVADLVEEVNAVSDEDIDKKYEEMKNDYNFVEGQNSSEKFEHNTKYQIREYFGLKKFMDDRGYTAFTTNFEDLAGLEQLPGLAAQMLMAEGYGFAGEGDWKTAALDRLLKIMAHNKQTVFMEDYTLDLREGHEAILGSHMLEVDPSIASDTPRVEVHPLDIGGKEDPARFVFTGMEGDAVDVTMADYGDEFKLMSYDVTGNKTEKETPYLPVAKQLWTPKQGWKQGAEGWLTLGGGHHTVLSFAIDAEQLQDLSNMFGLTYVNIK</sequence>
<gene>
    <name evidence="1" type="primary">araA</name>
    <name type="ordered locus">PEPE_0165</name>
</gene>
<name>ARAA_PEDPA</name>
<accession>Q03HQ0</accession>
<proteinExistence type="inferred from homology"/>